<accession>A8BPK8</accession>
<reference evidence="10 12" key="1">
    <citation type="journal article" date="2007" name="Science">
        <title>Genomic minimalism in the early diverging intestinal parasite Giardia lamblia.</title>
        <authorList>
            <person name="Morrison H.G."/>
            <person name="McArthur A.G."/>
            <person name="Gillin F.D."/>
            <person name="Aley S.B."/>
            <person name="Adam R.D."/>
            <person name="Olsen G.J."/>
            <person name="Best A.A."/>
            <person name="Cande W.Z."/>
            <person name="Chen F."/>
            <person name="Cipriano M.J."/>
            <person name="Davids B.J."/>
            <person name="Dawson S.C."/>
            <person name="Elmendorf H.G."/>
            <person name="Hehl A.B."/>
            <person name="Holder M.E."/>
            <person name="Huse S.M."/>
            <person name="Kim U.U."/>
            <person name="Lasek-Nesselquist E."/>
            <person name="Manning G."/>
            <person name="Nigam A."/>
            <person name="Nixon J.E.J."/>
            <person name="Palm D."/>
            <person name="Passamaneck N.E."/>
            <person name="Prabhu A."/>
            <person name="Reich C.I."/>
            <person name="Reiner D.S."/>
            <person name="Samuelson J."/>
            <person name="Svard S.G."/>
            <person name="Sogin M.L."/>
        </authorList>
    </citation>
    <scope>NUCLEOTIDE SEQUENCE [LARGE SCALE GENOMIC DNA]</scope>
    <source>
        <strain evidence="12">ATCC 50803 / WB clone C6</strain>
    </source>
</reference>
<reference evidence="11" key="2">
    <citation type="submission" date="2019-07" db="EMBL/GenBank/DDBJ databases">
        <title>New Giardia intestinalis WB genome in near-complete chromosomes.</title>
        <authorList>
            <person name="Xu F."/>
            <person name="Jex A."/>
            <person name="Svard S.G."/>
        </authorList>
    </citation>
    <scope>NUCLEOTIDE SEQUENCE [LARGE SCALE GENOMIC DNA]</scope>
    <source>
        <strain evidence="11">ATCC 50803 / WB clone C6</strain>
    </source>
</reference>
<reference key="3">
    <citation type="journal article" date="2021" name="Parasit. Vectors">
        <title>A polo-like kinase modulates cytokinesis and flagella biogenesis in Giardia lamblia.</title>
        <authorList>
            <person name="Park E.A."/>
            <person name="Kim J."/>
            <person name="Shin M.Y."/>
            <person name="Park S.J."/>
        </authorList>
    </citation>
    <scope>FUNCTION</scope>
    <scope>CATALYTIC ACTIVITY</scope>
    <scope>ACTIVITY REGULATION</scope>
    <scope>SUBCELLULAR LOCATION</scope>
    <scope>DEVELOPMENTAL STAGE</scope>
    <scope>PTM</scope>
    <scope>DISRUPTION PHENOTYPE</scope>
    <scope>PHOSPHORYLATION AT THR-179 AND THR-183</scope>
    <scope>MUTAGENESIS OF 1-MET--ASP-431; LYS-51; THR-179; THR-183 AND 432-PRO--GLU-678</scope>
    <source>
        <strain evidence="8">ATCC 30957 / WB</strain>
    </source>
</reference>
<reference key="4">
    <citation type="journal article" date="2022" name="Korean J. Parasitol.">
        <title>Kinesin-13, a Motor Protein, is Regulated by Polo-like Kinase in Giardia lamblia.</title>
        <authorList>
            <person name="Park E.A."/>
            <person name="Kim J."/>
            <person name="Shin M.Y."/>
            <person name="Park S.J."/>
        </authorList>
    </citation>
    <scope>FUNCTION</scope>
    <scope>INTERACTION WITH KIN-13</scope>
    <scope>SUBCELLULAR LOCATION</scope>
    <scope>AUTOPHOSPHORYLATION</scope>
    <scope>DISRUPTION PHENOTYPE</scope>
    <source>
        <strain evidence="9">ATCC 30957 / WB</strain>
    </source>
</reference>
<evidence type="ECO:0000255" key="1">
    <source>
        <dbReference type="PROSITE-ProRule" id="PRU00154"/>
    </source>
</evidence>
<evidence type="ECO:0000255" key="2">
    <source>
        <dbReference type="PROSITE-ProRule" id="PRU00159"/>
    </source>
</evidence>
<evidence type="ECO:0000255" key="3">
    <source>
        <dbReference type="PROSITE-ProRule" id="PRU10141"/>
    </source>
</evidence>
<evidence type="ECO:0000255" key="4">
    <source>
        <dbReference type="RuleBase" id="RU361162"/>
    </source>
</evidence>
<evidence type="ECO:0000256" key="5">
    <source>
        <dbReference type="SAM" id="MobiDB-lite"/>
    </source>
</evidence>
<evidence type="ECO:0000269" key="6">
    <source>
    </source>
</evidence>
<evidence type="ECO:0000269" key="7">
    <source>
    </source>
</evidence>
<evidence type="ECO:0000303" key="8">
    <source>
    </source>
</evidence>
<evidence type="ECO:0000303" key="9">
    <source>
    </source>
</evidence>
<evidence type="ECO:0000312" key="10">
    <source>
        <dbReference type="EMBL" id="EDO78102.1"/>
    </source>
</evidence>
<evidence type="ECO:0000312" key="11">
    <source>
        <dbReference type="EMBL" id="KAE8303276.1"/>
    </source>
</evidence>
<evidence type="ECO:0000312" key="12">
    <source>
        <dbReference type="Proteomes" id="UP000001548"/>
    </source>
</evidence>
<comment type="function">
    <text evidence="6 7">Involved in cell cycle (PubMed:33789729, PubMed:35772734). Involved in cell division (PubMed:33789729). Involved in cytokinesis (PubMed:33789729). Involved in flagella biogenesis and in regulation of flagella length in interphase (PubMed:33789729, PubMed:35772734). Involved in formation of median bodies during interphase (PubMed:35772734). Phosphorylates Kin-13 in vitro (PubMed:35772734). Likely regulates microtubule (MT) depolymerizing activity of Kin-13 (PubMed:35772734).</text>
</comment>
<comment type="catalytic activity">
    <reaction>
        <text>L-seryl-[protein] + ATP = O-phospho-L-seryl-[protein] + ADP + H(+)</text>
        <dbReference type="Rhea" id="RHEA:17989"/>
        <dbReference type="Rhea" id="RHEA-COMP:9863"/>
        <dbReference type="Rhea" id="RHEA-COMP:11604"/>
        <dbReference type="ChEBI" id="CHEBI:15378"/>
        <dbReference type="ChEBI" id="CHEBI:29999"/>
        <dbReference type="ChEBI" id="CHEBI:30616"/>
        <dbReference type="ChEBI" id="CHEBI:83421"/>
        <dbReference type="ChEBI" id="CHEBI:456216"/>
        <dbReference type="EC" id="2.7.11.21"/>
    </reaction>
</comment>
<comment type="catalytic activity">
    <reaction evidence="4 6">
        <text>L-threonyl-[protein] + ATP = O-phospho-L-threonyl-[protein] + ADP + H(+)</text>
        <dbReference type="Rhea" id="RHEA:46608"/>
        <dbReference type="Rhea" id="RHEA-COMP:11060"/>
        <dbReference type="Rhea" id="RHEA-COMP:11605"/>
        <dbReference type="ChEBI" id="CHEBI:15378"/>
        <dbReference type="ChEBI" id="CHEBI:30013"/>
        <dbReference type="ChEBI" id="CHEBI:30616"/>
        <dbReference type="ChEBI" id="CHEBI:61977"/>
        <dbReference type="ChEBI" id="CHEBI:456216"/>
        <dbReference type="EC" id="2.7.11.21"/>
    </reaction>
</comment>
<comment type="activity regulation">
    <text evidence="6">Inhibited by GW843286X (GW), an ATP-competitive inhibitor. Inhibition leads to reduced growth, increased number of cells with more than four nuclei, increased number of cells with condensed nuclei, cell cycle arrest at G2/M or G1/S phase depending on the treatment time with GW, and increased length of membrane-bound portions of the caudal and anterior flagella.</text>
</comment>
<comment type="subunit">
    <text evidence="7">Interacts with Kin-13.</text>
</comment>
<comment type="subcellular location">
    <subcellularLocation>
        <location evidence="6 7">Cell projection</location>
        <location evidence="6 7">Cilium</location>
        <location evidence="6 7">Flagellum</location>
    </subcellularLocation>
    <subcellularLocation>
        <location evidence="6 7">Cytoplasm</location>
        <location evidence="6 7">Cytoskeleton</location>
        <location evidence="6 7">Flagellum basal body</location>
    </subcellularLocation>
    <subcellularLocation>
        <location evidence="6 7">Cytoplasm</location>
        <location evidence="6 7">Cytoskeleton</location>
        <location evidence="6 7">Flagellum axoneme</location>
    </subcellularLocation>
    <subcellularLocation>
        <location evidence="6 7">Cytoplasm</location>
        <location evidence="6 7">Cytoskeleton</location>
    </subcellularLocation>
    <subcellularLocation>
        <location evidence="6">Cytoplasm</location>
        <location evidence="6">Cytoskeleton</location>
        <location evidence="6">Spindle</location>
    </subcellularLocation>
    <subcellularLocation>
        <location evidence="6">Membrane</location>
    </subcellularLocation>
    <text evidence="6 7">Found in both the membrane and the cytoplasmic fractions in interphase, G1/S and G2/M phases of the cell cycle (PubMed:33789729). Localizes to basal bodies, flagella, axonemes, adhesive disk and median bodies of trophozoites in interphase (PubMed:33789729). Remains localization at the basal bodies in metaphase, anaphase, telophase and cytokinesis (PubMed:33789729). Also localizes to mitotic spindles and axonemes in anaphase (PubMed:33789729). Colocalizes with microtubules (MTs) in the basal bodies, flagella, axonemes and median bodies in interphase and anaphase (PubMed:33789729). Colocalizes with MTs in the mitotic spindles present between two separated groups of basal bodies in anaphase (PubMed:33789729). Colocalizes with centrin in interphase as well as during cell division (PubMed:33789729). Phosphorylated form localizes to basal bodies and distinctly to the cytoplasmic portion of anterior flagella, median bodies, and flagella tips in interphase cells (PubMed:33789729, PubMed:35772734). Phosphorylated form localizes to basal bodies and mitotic spindles in dividing cells (PubMed:33789729).</text>
</comment>
<comment type="developmental stage">
    <text evidence="6">Increased expression in interphase and G2/M phase compared to G1/S phase (at protein level). Phosphorylated form increases during the G2/M phase. Increased transcriptional expression in G2/M phase compared to G1/S phase.</text>
</comment>
<comment type="PTM">
    <text evidence="6 7">Autophosphorylated (PubMed:33789729, PubMed:35772734). Autophosphorylation is critical for its function in cell growth, cytokinesis and formation of flagella (PubMed:33789729).</text>
</comment>
<comment type="disruption phenotype">
    <text evidence="6 7">Morpholino knockdown results in increased number of cells with more than four nuclei, increased number of cells with condensed nuclei, time-dependent cell cycle arrest at G2/M or G1/S phase, and increased length of membrane-bound portions of the caudal, anterior and ventral flagella (PubMed:33789729). Simultaneous morpholino knockdown of both PLK and Kin-13 in interphase cells results in increased length of the caudal and anterior flagella, and to a lesser extent ventral flagella, and reduced volume of the median body (PubMed:35772734).</text>
</comment>
<comment type="similarity">
    <text evidence="4">Belongs to the protein kinase superfamily. Ser/Thr protein kinase family. CDC5/Polo subfamily.</text>
</comment>
<protein>
    <recommendedName>
        <fullName evidence="4 8">Serine/threonine-protein kinase PLK</fullName>
        <ecNumber evidence="4 6">2.7.11.21</ecNumber>
    </recommendedName>
    <alternativeName>
        <fullName evidence="8 9">GlPLK</fullName>
    </alternativeName>
    <alternativeName>
        <fullName evidence="4 8 9">Polo-like kinase</fullName>
        <shortName evidence="8 9">PLK</shortName>
    </alternativeName>
</protein>
<keyword id="KW-0067">ATP-binding</keyword>
<keyword id="KW-0131">Cell cycle</keyword>
<keyword id="KW-0132">Cell division</keyword>
<keyword id="KW-0966">Cell projection</keyword>
<keyword id="KW-0969">Cilium</keyword>
<keyword id="KW-0963">Cytoplasm</keyword>
<keyword id="KW-0206">Cytoskeleton</keyword>
<keyword id="KW-0282">Flagellum</keyword>
<keyword id="KW-0418">Kinase</keyword>
<keyword id="KW-0472">Membrane</keyword>
<keyword id="KW-0547">Nucleotide-binding</keyword>
<keyword id="KW-0597">Phosphoprotein</keyword>
<keyword id="KW-1185">Reference proteome</keyword>
<keyword id="KW-0677">Repeat</keyword>
<keyword id="KW-0723">Serine/threonine-protein kinase</keyword>
<keyword id="KW-0808">Transferase</keyword>
<name>PLK_GIAIC</name>
<feature type="chain" id="PRO_0000459117" description="Serine/threonine-protein kinase PLK">
    <location>
        <begin position="1"/>
        <end position="678"/>
    </location>
</feature>
<feature type="domain" description="Protein kinase" evidence="2">
    <location>
        <begin position="22"/>
        <end position="309"/>
    </location>
</feature>
<feature type="domain" description="POLO box 1" evidence="1">
    <location>
        <begin position="435"/>
        <end position="516"/>
    </location>
</feature>
<feature type="domain" description="POLO box 2" evidence="1">
    <location>
        <begin position="563"/>
        <end position="644"/>
    </location>
</feature>
<feature type="region of interest" description="Disordered" evidence="5">
    <location>
        <begin position="658"/>
        <end position="678"/>
    </location>
</feature>
<feature type="compositionally biased region" description="Polar residues" evidence="5">
    <location>
        <begin position="663"/>
        <end position="678"/>
    </location>
</feature>
<feature type="active site" description="Proton acceptor" evidence="2">
    <location>
        <position position="145"/>
    </location>
</feature>
<feature type="binding site" evidence="2">
    <location>
        <begin position="28"/>
        <end position="36"/>
    </location>
    <ligand>
        <name>ATP</name>
        <dbReference type="ChEBI" id="CHEBI:30616"/>
    </ligand>
</feature>
<feature type="binding site" evidence="2 3">
    <location>
        <position position="51"/>
    </location>
    <ligand>
        <name>ATP</name>
        <dbReference type="ChEBI" id="CHEBI:30616"/>
    </ligand>
</feature>
<feature type="modified residue" description="Phosphothreonine; by autocatalysis" evidence="6">
    <location>
        <position position="179"/>
    </location>
</feature>
<feature type="modified residue" description="Phosphothreonine; by autocatalysis" evidence="6">
    <location>
        <position position="183"/>
    </location>
</feature>
<feature type="mutagenesis site" description="No effect on subcellular localization." evidence="6">
    <location>
        <begin position="1"/>
        <end position="431"/>
    </location>
</feature>
<feature type="mutagenesis site" description="Loss of autophosphorylation. Reduced growth, increased number of cells with four or more nuclei, increased number of cells with condensed nuclei, and increased length of the caudal, anterior and ventral flagella." evidence="6">
    <original>K</original>
    <variation>R</variation>
    <location>
        <position position="51"/>
    </location>
</feature>
<feature type="mutagenesis site" description="Substantial decrease in autophosphorylation, reduced growth, increased number of cells with four or more nuclei, increased number of cells with condensed nuclei, and increased length of the caudal, anterior and ventral flagella; when associated with A-183." evidence="6">
    <original>T</original>
    <variation>A</variation>
    <location>
        <position position="179"/>
    </location>
</feature>
<feature type="mutagenesis site" description="Substantial decrease in autophosphorylation, reduced growth, increased number of cells with four or more nuclei, increased number of cells with condensed nuclei, and increased length of the caudal, anterior and ventral flagella; when associated with A-179." evidence="6">
    <original>T</original>
    <variation>A</variation>
    <location>
        <position position="183"/>
    </location>
</feature>
<feature type="mutagenesis site" description="Does not localize to mitotic spindles at anaphase. Colocalizes with centrin at basal bodies of the dividing cells, however, the basal bodies are positioned incorrectly." evidence="6">
    <location>
        <begin position="432"/>
        <end position="678"/>
    </location>
</feature>
<gene>
    <name evidence="9" type="primary">plk</name>
    <name evidence="11" type="ORF">GL50803_00104150</name>
    <name evidence="10" type="ORF">GL50803_104150</name>
</gene>
<proteinExistence type="evidence at protein level"/>
<dbReference type="EC" id="2.7.11.21" evidence="4 6"/>
<dbReference type="EMBL" id="AACB02000030">
    <property type="protein sequence ID" value="EDO78102.1"/>
    <property type="molecule type" value="Genomic_DNA"/>
</dbReference>
<dbReference type="EMBL" id="AACB03000003">
    <property type="protein sequence ID" value="KAE8303276.1"/>
    <property type="molecule type" value="Genomic_DNA"/>
</dbReference>
<dbReference type="RefSeq" id="XP_001705776.1">
    <property type="nucleotide sequence ID" value="XM_001705724.1"/>
</dbReference>
<dbReference type="SMR" id="A8BPK8"/>
<dbReference type="FunCoup" id="A8BPK8">
    <property type="interactions" value="112"/>
</dbReference>
<dbReference type="STRING" id="184922.A8BPK8"/>
<dbReference type="iPTMnet" id="A8BPK8"/>
<dbReference type="EnsemblProtists" id="EDO78102">
    <property type="protein sequence ID" value="EDO78102"/>
    <property type="gene ID" value="GL50803_104150"/>
</dbReference>
<dbReference type="GeneID" id="5698661"/>
<dbReference type="KEGG" id="gla:GL50803_00104150"/>
<dbReference type="VEuPathDB" id="GiardiaDB:GL50803_104150"/>
<dbReference type="HOGENOM" id="CLU_000288_46_1_1"/>
<dbReference type="InParanoid" id="A8BPK8"/>
<dbReference type="OMA" id="NMPESDH"/>
<dbReference type="Proteomes" id="UP000001548">
    <property type="component" value="Chromosome 3"/>
</dbReference>
<dbReference type="GO" id="GO:0005930">
    <property type="term" value="C:axoneme"/>
    <property type="evidence" value="ECO:0000314"/>
    <property type="project" value="UniProtKB"/>
</dbReference>
<dbReference type="GO" id="GO:0036064">
    <property type="term" value="C:ciliary basal body"/>
    <property type="evidence" value="ECO:0000314"/>
    <property type="project" value="UniProtKB"/>
</dbReference>
<dbReference type="GO" id="GO:0097542">
    <property type="term" value="C:ciliary tip"/>
    <property type="evidence" value="ECO:0000314"/>
    <property type="project" value="UniProtKB"/>
</dbReference>
<dbReference type="GO" id="GO:1902671">
    <property type="term" value="C:left anterior basal body"/>
    <property type="evidence" value="ECO:0000314"/>
    <property type="project" value="UniProtKB"/>
</dbReference>
<dbReference type="GO" id="GO:0097554">
    <property type="term" value="C:left anterior flagellum"/>
    <property type="evidence" value="ECO:0000314"/>
    <property type="project" value="UniProtKB"/>
</dbReference>
<dbReference type="GO" id="GO:1902677">
    <property type="term" value="C:left caudal basal body"/>
    <property type="evidence" value="ECO:0000314"/>
    <property type="project" value="UniProtKB"/>
</dbReference>
<dbReference type="GO" id="GO:0097560">
    <property type="term" value="C:left caudal flagellum"/>
    <property type="evidence" value="ECO:0000314"/>
    <property type="project" value="UniProtKB"/>
</dbReference>
<dbReference type="GO" id="GO:1902673">
    <property type="term" value="C:left posteriolateral basal body"/>
    <property type="evidence" value="ECO:0000314"/>
    <property type="project" value="UniProtKB"/>
</dbReference>
<dbReference type="GO" id="GO:0097556">
    <property type="term" value="C:left posteriolateral flagellum"/>
    <property type="evidence" value="ECO:0000314"/>
    <property type="project" value="UniProtKB"/>
</dbReference>
<dbReference type="GO" id="GO:1902675">
    <property type="term" value="C:left ventral basal body"/>
    <property type="evidence" value="ECO:0000314"/>
    <property type="project" value="UniProtKB"/>
</dbReference>
<dbReference type="GO" id="GO:0097558">
    <property type="term" value="C:left ventral flagellum"/>
    <property type="evidence" value="ECO:0000314"/>
    <property type="project" value="UniProtKB"/>
</dbReference>
<dbReference type="GO" id="GO:0097568">
    <property type="term" value="C:median body"/>
    <property type="evidence" value="ECO:0000314"/>
    <property type="project" value="UniProtKB"/>
</dbReference>
<dbReference type="GO" id="GO:0016020">
    <property type="term" value="C:membrane"/>
    <property type="evidence" value="ECO:0000314"/>
    <property type="project" value="UniProtKB"/>
</dbReference>
<dbReference type="GO" id="GO:0072686">
    <property type="term" value="C:mitotic spindle"/>
    <property type="evidence" value="ECO:0000314"/>
    <property type="project" value="UniProtKB"/>
</dbReference>
<dbReference type="GO" id="GO:0005634">
    <property type="term" value="C:nucleus"/>
    <property type="evidence" value="ECO:0000318"/>
    <property type="project" value="GO_Central"/>
</dbReference>
<dbReference type="GO" id="GO:1902672">
    <property type="term" value="C:right anterior basal body"/>
    <property type="evidence" value="ECO:0000314"/>
    <property type="project" value="UniProtKB"/>
</dbReference>
<dbReference type="GO" id="GO:0097555">
    <property type="term" value="C:right anterior flagellum"/>
    <property type="evidence" value="ECO:0000314"/>
    <property type="project" value="UniProtKB"/>
</dbReference>
<dbReference type="GO" id="GO:1902678">
    <property type="term" value="C:right caudal basal body"/>
    <property type="evidence" value="ECO:0000314"/>
    <property type="project" value="UniProtKB"/>
</dbReference>
<dbReference type="GO" id="GO:0097561">
    <property type="term" value="C:right caudal flagellum"/>
    <property type="evidence" value="ECO:0000314"/>
    <property type="project" value="UniProtKB"/>
</dbReference>
<dbReference type="GO" id="GO:1902674">
    <property type="term" value="C:right posteriolateral basal body"/>
    <property type="evidence" value="ECO:0000314"/>
    <property type="project" value="UniProtKB"/>
</dbReference>
<dbReference type="GO" id="GO:0097557">
    <property type="term" value="C:right posteriolateral flagellum"/>
    <property type="evidence" value="ECO:0000314"/>
    <property type="project" value="UniProtKB"/>
</dbReference>
<dbReference type="GO" id="GO:1902676">
    <property type="term" value="C:right ventral basal body"/>
    <property type="evidence" value="ECO:0000314"/>
    <property type="project" value="UniProtKB"/>
</dbReference>
<dbReference type="GO" id="GO:0097559">
    <property type="term" value="C:right ventral flagellum"/>
    <property type="evidence" value="ECO:0000314"/>
    <property type="project" value="UniProtKB"/>
</dbReference>
<dbReference type="GO" id="GO:0097597">
    <property type="term" value="C:ventral disc"/>
    <property type="evidence" value="ECO:0000314"/>
    <property type="project" value="UniProtKB"/>
</dbReference>
<dbReference type="GO" id="GO:0005524">
    <property type="term" value="F:ATP binding"/>
    <property type="evidence" value="ECO:0007669"/>
    <property type="project" value="UniProtKB-KW"/>
</dbReference>
<dbReference type="GO" id="GO:0004672">
    <property type="term" value="F:protein kinase activity"/>
    <property type="evidence" value="ECO:0000314"/>
    <property type="project" value="UniProtKB"/>
</dbReference>
<dbReference type="GO" id="GO:0004674">
    <property type="term" value="F:protein serine/threonine kinase activity"/>
    <property type="evidence" value="ECO:0000314"/>
    <property type="project" value="UniProtKB"/>
</dbReference>
<dbReference type="GO" id="GO:0000278">
    <property type="term" value="P:mitotic cell cycle"/>
    <property type="evidence" value="ECO:0000270"/>
    <property type="project" value="UniProtKB"/>
</dbReference>
<dbReference type="GO" id="GO:1902410">
    <property type="term" value="P:mitotic cytokinetic process"/>
    <property type="evidence" value="ECO:0000315"/>
    <property type="project" value="UniProtKB"/>
</dbReference>
<dbReference type="GO" id="GO:0140014">
    <property type="term" value="P:mitotic nuclear division"/>
    <property type="evidence" value="ECO:0000315"/>
    <property type="project" value="UniProtKB"/>
</dbReference>
<dbReference type="GO" id="GO:1905504">
    <property type="term" value="P:negative regulation of motile cilium assembly"/>
    <property type="evidence" value="ECO:0000315"/>
    <property type="project" value="UniProtKB"/>
</dbReference>
<dbReference type="GO" id="GO:1901978">
    <property type="term" value="P:positive regulation of cell cycle checkpoint"/>
    <property type="evidence" value="ECO:0000315"/>
    <property type="project" value="UniProtKB"/>
</dbReference>
<dbReference type="GO" id="GO:0031114">
    <property type="term" value="P:regulation of microtubule depolymerization"/>
    <property type="evidence" value="ECO:0000316"/>
    <property type="project" value="UniProtKB"/>
</dbReference>
<dbReference type="CDD" id="cd13118">
    <property type="entry name" value="POLO_box_1"/>
    <property type="match status" value="1"/>
</dbReference>
<dbReference type="CDD" id="cd13117">
    <property type="entry name" value="POLO_box_2"/>
    <property type="match status" value="1"/>
</dbReference>
<dbReference type="FunFam" id="3.30.200.20:FF:000042">
    <property type="entry name" value="Aurora kinase A"/>
    <property type="match status" value="1"/>
</dbReference>
<dbReference type="Gene3D" id="3.30.200.20">
    <property type="entry name" value="Phosphorylase Kinase, domain 1"/>
    <property type="match status" value="1"/>
</dbReference>
<dbReference type="Gene3D" id="3.30.1120.30">
    <property type="entry name" value="POLO box domain"/>
    <property type="match status" value="2"/>
</dbReference>
<dbReference type="Gene3D" id="1.10.510.10">
    <property type="entry name" value="Transferase(Phosphotransferase) domain 1"/>
    <property type="match status" value="1"/>
</dbReference>
<dbReference type="InterPro" id="IPR011009">
    <property type="entry name" value="Kinase-like_dom_sf"/>
</dbReference>
<dbReference type="InterPro" id="IPR033701">
    <property type="entry name" value="POLO_box_1"/>
</dbReference>
<dbReference type="InterPro" id="IPR033695">
    <property type="entry name" value="POLO_box_2"/>
</dbReference>
<dbReference type="InterPro" id="IPR000959">
    <property type="entry name" value="POLO_box_dom"/>
</dbReference>
<dbReference type="InterPro" id="IPR036947">
    <property type="entry name" value="POLO_box_dom_sf"/>
</dbReference>
<dbReference type="InterPro" id="IPR000719">
    <property type="entry name" value="Prot_kinase_dom"/>
</dbReference>
<dbReference type="InterPro" id="IPR017441">
    <property type="entry name" value="Protein_kinase_ATP_BS"/>
</dbReference>
<dbReference type="InterPro" id="IPR008271">
    <property type="entry name" value="Ser/Thr_kinase_AS"/>
</dbReference>
<dbReference type="PANTHER" id="PTHR24345:SF0">
    <property type="entry name" value="CELL CYCLE SERINE_THREONINE-PROTEIN KINASE CDC5_MSD2"/>
    <property type="match status" value="1"/>
</dbReference>
<dbReference type="PANTHER" id="PTHR24345">
    <property type="entry name" value="SERINE/THREONINE-PROTEIN KINASE PLK"/>
    <property type="match status" value="1"/>
</dbReference>
<dbReference type="Pfam" id="PF00069">
    <property type="entry name" value="Pkinase"/>
    <property type="match status" value="2"/>
</dbReference>
<dbReference type="Pfam" id="PF00659">
    <property type="entry name" value="POLO_box"/>
    <property type="match status" value="1"/>
</dbReference>
<dbReference type="SMART" id="SM00220">
    <property type="entry name" value="S_TKc"/>
    <property type="match status" value="1"/>
</dbReference>
<dbReference type="SUPFAM" id="SSF82615">
    <property type="entry name" value="Polo-box domain"/>
    <property type="match status" value="2"/>
</dbReference>
<dbReference type="SUPFAM" id="SSF56112">
    <property type="entry name" value="Protein kinase-like (PK-like)"/>
    <property type="match status" value="1"/>
</dbReference>
<dbReference type="PROSITE" id="PS50078">
    <property type="entry name" value="POLO_BOX"/>
    <property type="match status" value="2"/>
</dbReference>
<dbReference type="PROSITE" id="PS00107">
    <property type="entry name" value="PROTEIN_KINASE_ATP"/>
    <property type="match status" value="1"/>
</dbReference>
<dbReference type="PROSITE" id="PS50011">
    <property type="entry name" value="PROTEIN_KINASE_DOM"/>
    <property type="match status" value="1"/>
</dbReference>
<dbReference type="PROSITE" id="PS00108">
    <property type="entry name" value="PROTEIN_KINASE_ST"/>
    <property type="match status" value="1"/>
</dbReference>
<sequence length="678" mass="77190">MSHSNAPELHPQIVDPFHNVTYRPGKLLGKGGFAYVYEFHDVNSDSSYACKITPRSALQKKKYYDKFVTEVTIHRGLVHPNICRVLNVFKDQMNYYIILEKCNGGTLTDLIRRRKHLTETEARFFSKRILNALWYLHDLYIIHRDIKTSNIFLMEDFDVKVGDFGLAVKCETPEELHWTMCGTPNFLPSEVIYSHIMKRKASGRGPDPNLDEDCVNLCHQLLPAYSGQGHSFSADMWSFGCLVFSMIYGRPPFEAADIKTTYKRIVRCDFSFPGSISVSEDLKNFIKGLLTPDPRKRFTVKECLDHSWLNPSKYFIPESLPPRIISEPYEVPPLCSASPTRNMQMTINMAKNAGGTDGRFIAATPQAIGGTEHIPTPGTANFYKPQNAILTTKSAAGISRASTAMAMQNVGSAQGVVNKYGINEAEYPQIDPPCYIMSWVDYSNRYGFAYQISNGSIGVIFNDESAAILSPNALIVDYSPSLLDAAFDRALFEEGTTILSEKKFKLLSFFRDYLENRSIVPIPAADRPKEDEELKRVIEQERMNNQEIDFKRLTKGLPLPQLFLKKWKLYDDGTLCLLFNTKVFQVNFADHSKVVVAHRSVTFMSEKREIYTYPSEYLKDDRFSFKELRRRVDRARKYYEIIKAARPVDSLAQYRYNKDSTKKSASGSSTRQLGQGGE</sequence>
<organism evidence="10">
    <name type="scientific">Giardia intestinalis (strain ATCC 50803 / WB clone C6)</name>
    <name type="common">Giardia lamblia</name>
    <dbReference type="NCBI Taxonomy" id="184922"/>
    <lineage>
        <taxon>Eukaryota</taxon>
        <taxon>Metamonada</taxon>
        <taxon>Diplomonadida</taxon>
        <taxon>Hexamitidae</taxon>
        <taxon>Giardiinae</taxon>
        <taxon>Giardia</taxon>
    </lineage>
</organism>